<protein>
    <recommendedName>
        <fullName>Corticoliberin</fullName>
    </recommendedName>
    <alternativeName>
        <fullName>Corticotropin-releasing factor</fullName>
        <shortName>CRF</shortName>
    </alternativeName>
    <alternativeName>
        <fullName>Corticotropin-releasing hormone</fullName>
    </alternativeName>
</protein>
<keyword id="KW-0027">Amidation</keyword>
<keyword id="KW-0165">Cleavage on pair of basic residues</keyword>
<keyword id="KW-0372">Hormone</keyword>
<keyword id="KW-1185">Reference proteome</keyword>
<keyword id="KW-0964">Secreted</keyword>
<keyword id="KW-0732">Signal</keyword>
<organism>
    <name type="scientific">Carassius auratus</name>
    <name type="common">Goldfish</name>
    <dbReference type="NCBI Taxonomy" id="7957"/>
    <lineage>
        <taxon>Eukaryota</taxon>
        <taxon>Metazoa</taxon>
        <taxon>Chordata</taxon>
        <taxon>Craniata</taxon>
        <taxon>Vertebrata</taxon>
        <taxon>Euteleostomi</taxon>
        <taxon>Actinopterygii</taxon>
        <taxon>Neopterygii</taxon>
        <taxon>Teleostei</taxon>
        <taxon>Ostariophysi</taxon>
        <taxon>Cypriniformes</taxon>
        <taxon>Cyprinidae</taxon>
        <taxon>Cyprininae</taxon>
        <taxon>Carassius</taxon>
    </lineage>
</organism>
<accession>Q9PTS1</accession>
<evidence type="ECO:0000250" key="1"/>
<evidence type="ECO:0000255" key="2"/>
<evidence type="ECO:0000305" key="3"/>
<evidence type="ECO:0000305" key="4">
    <source>
    </source>
</evidence>
<gene>
    <name type="primary">crh</name>
    <name type="synonym">crf</name>
</gene>
<comment type="function">
    <text>This hormone from hypothalamus regulates the release of corticotropin from pituitary gland.</text>
</comment>
<comment type="subcellular location">
    <subcellularLocation>
        <location>Secreted</location>
    </subcellularLocation>
</comment>
<comment type="similarity">
    <text evidence="3">Belongs to the sauvagine/corticotropin-releasing factor/urotensin I family.</text>
</comment>
<reference key="1">
    <citation type="journal article" date="1999" name="Gen. Comp. Endocrinol.">
        <title>Differential expression of corticotropin-releasing factor (CRF) and urotensin I precursor genes, and evidence of CRF gene expression regulated by cortisol in goldfish brain.</title>
        <authorList>
            <person name="Bernier N.J."/>
            <person name="Lin X."/>
            <person name="Peter R.E."/>
        </authorList>
    </citation>
    <scope>NUCLEOTIDE SEQUENCE [MRNA]</scope>
    <scope>AMIDATION AT PHE-160</scope>
    <source>
        <tissue>Brain</tissue>
    </source>
</reference>
<name>CRF_CARAU</name>
<proteinExistence type="evidence at protein level"/>
<dbReference type="EMBL" id="AF098629">
    <property type="protein sequence ID" value="AAF04625.1"/>
    <property type="molecule type" value="mRNA"/>
</dbReference>
<dbReference type="OrthoDB" id="9837731at2759"/>
<dbReference type="Proteomes" id="UP000515129">
    <property type="component" value="Unplaced"/>
</dbReference>
<dbReference type="GO" id="GO:0005576">
    <property type="term" value="C:extracellular region"/>
    <property type="evidence" value="ECO:0007669"/>
    <property type="project" value="UniProtKB-SubCell"/>
</dbReference>
<dbReference type="GO" id="GO:0005179">
    <property type="term" value="F:hormone activity"/>
    <property type="evidence" value="ECO:0007669"/>
    <property type="project" value="UniProtKB-KW"/>
</dbReference>
<dbReference type="Gene3D" id="6.10.250.1920">
    <property type="match status" value="1"/>
</dbReference>
<dbReference type="InterPro" id="IPR018446">
    <property type="entry name" value="Corticotropin-releasing_fac_CS"/>
</dbReference>
<dbReference type="InterPro" id="IPR000187">
    <property type="entry name" value="CRF"/>
</dbReference>
<dbReference type="InterPro" id="IPR003620">
    <property type="entry name" value="Urocortin_CRF"/>
</dbReference>
<dbReference type="PANTHER" id="PTHR15035:SF9">
    <property type="entry name" value="CORTICOLIBERIN"/>
    <property type="match status" value="1"/>
</dbReference>
<dbReference type="PANTHER" id="PTHR15035">
    <property type="entry name" value="CORTICOLIBERIN/UROCORTIN"/>
    <property type="match status" value="1"/>
</dbReference>
<dbReference type="Pfam" id="PF00473">
    <property type="entry name" value="CRF"/>
    <property type="match status" value="1"/>
</dbReference>
<dbReference type="PRINTS" id="PR01612">
    <property type="entry name" value="CRFFAMILY"/>
</dbReference>
<dbReference type="SMART" id="SM00039">
    <property type="entry name" value="CRF"/>
    <property type="match status" value="1"/>
</dbReference>
<dbReference type="PROSITE" id="PS00511">
    <property type="entry name" value="CRF"/>
    <property type="match status" value="1"/>
</dbReference>
<sequence length="162" mass="18418">MKLNFLVTTVALLVAFPPPYECRAIEGSSNQPATDPDGERQSPPVLARLGEEYFIRLGNRNQNYLRSPADSFPETSQYSKRALQLQLTQRLLEGKVGNIGRLDGNYALRALDSVERERRSEEPPISLDLTFHLLREVLEMARAEQMAQQAHSNRKMMEIFGK</sequence>
<feature type="signal peptide" evidence="2">
    <location>
        <begin position="1"/>
        <end position="24"/>
    </location>
</feature>
<feature type="propeptide" id="PRO_0000006224" evidence="1">
    <location>
        <begin position="25"/>
        <end position="119"/>
    </location>
</feature>
<feature type="peptide" id="PRO_0000006225" description="Corticoliberin">
    <location>
        <begin position="120"/>
        <end position="160"/>
    </location>
</feature>
<feature type="modified residue" description="Phenylalanine amide" evidence="4">
    <location>
        <position position="160"/>
    </location>
</feature>